<dbReference type="EC" id="2.7.1.21" evidence="1"/>
<dbReference type="EMBL" id="X51523">
    <property type="protein sequence ID" value="CAA35907.1"/>
    <property type="molecule type" value="Genomic_DNA"/>
</dbReference>
<dbReference type="EMBL" id="X53733">
    <property type="protein sequence ID" value="CAA37765.1"/>
    <property type="molecule type" value="Genomic_DNA"/>
</dbReference>
<dbReference type="EMBL" id="X67326">
    <property type="protein sequence ID" value="CAA47741.1"/>
    <property type="molecule type" value="Genomic_DNA"/>
</dbReference>
<dbReference type="EMBL" id="DQ384607">
    <property type="protein sequence ID" value="ABD37701.1"/>
    <property type="molecule type" value="Genomic_DNA"/>
</dbReference>
<dbReference type="EMBL" id="U00096">
    <property type="protein sequence ID" value="AAC74320.1"/>
    <property type="molecule type" value="Genomic_DNA"/>
</dbReference>
<dbReference type="EMBL" id="AP009048">
    <property type="protein sequence ID" value="BAA36118.1"/>
    <property type="molecule type" value="Genomic_DNA"/>
</dbReference>
<dbReference type="PIR" id="JS0519">
    <property type="entry name" value="JS0519"/>
</dbReference>
<dbReference type="RefSeq" id="NP_415754.1">
    <property type="nucleotide sequence ID" value="NC_000913.3"/>
</dbReference>
<dbReference type="RefSeq" id="WP_000068077.1">
    <property type="nucleotide sequence ID" value="NZ_SSZK01000031.1"/>
</dbReference>
<dbReference type="SMR" id="P23331"/>
<dbReference type="BioGRID" id="4259556">
    <property type="interactions" value="230"/>
</dbReference>
<dbReference type="FunCoup" id="P23331">
    <property type="interactions" value="402"/>
</dbReference>
<dbReference type="IntAct" id="P23331">
    <property type="interactions" value="6"/>
</dbReference>
<dbReference type="STRING" id="511145.b1238"/>
<dbReference type="DrugBank" id="DB03280">
    <property type="generic name" value="p1-(5'-adenosyl)p5-(5'-thymidyl)pentaphosphate"/>
</dbReference>
<dbReference type="jPOST" id="P23331"/>
<dbReference type="PaxDb" id="511145-b1238"/>
<dbReference type="EnsemblBacteria" id="AAC74320">
    <property type="protein sequence ID" value="AAC74320"/>
    <property type="gene ID" value="b1238"/>
</dbReference>
<dbReference type="GeneID" id="945834"/>
<dbReference type="KEGG" id="ecj:JW1226"/>
<dbReference type="KEGG" id="eco:b1238"/>
<dbReference type="KEGG" id="ecoc:C3026_07280"/>
<dbReference type="PATRIC" id="fig|1411691.4.peg.1047"/>
<dbReference type="EchoBASE" id="EB0987"/>
<dbReference type="eggNOG" id="COG1435">
    <property type="taxonomic scope" value="Bacteria"/>
</dbReference>
<dbReference type="HOGENOM" id="CLU_064400_2_1_6"/>
<dbReference type="InParanoid" id="P23331"/>
<dbReference type="OMA" id="GTMDCGK"/>
<dbReference type="OrthoDB" id="9781579at2"/>
<dbReference type="PhylomeDB" id="P23331"/>
<dbReference type="BioCyc" id="EcoCyc:TDK-MONOMER"/>
<dbReference type="BioCyc" id="MetaCyc:TDK-MONOMER"/>
<dbReference type="PRO" id="PR:P23331"/>
<dbReference type="Proteomes" id="UP000000625">
    <property type="component" value="Chromosome"/>
</dbReference>
<dbReference type="GO" id="GO:0005829">
    <property type="term" value="C:cytosol"/>
    <property type="evidence" value="ECO:0000314"/>
    <property type="project" value="EcoCyc"/>
</dbReference>
<dbReference type="GO" id="GO:0005524">
    <property type="term" value="F:ATP binding"/>
    <property type="evidence" value="ECO:0007669"/>
    <property type="project" value="UniProtKB-UniRule"/>
</dbReference>
<dbReference type="GO" id="GO:0042802">
    <property type="term" value="F:identical protein binding"/>
    <property type="evidence" value="ECO:0000314"/>
    <property type="project" value="EcoCyc"/>
</dbReference>
<dbReference type="GO" id="GO:0004797">
    <property type="term" value="F:thymidine kinase activity"/>
    <property type="evidence" value="ECO:0000314"/>
    <property type="project" value="EcoCyc"/>
</dbReference>
<dbReference type="GO" id="GO:0008270">
    <property type="term" value="F:zinc ion binding"/>
    <property type="evidence" value="ECO:0007669"/>
    <property type="project" value="UniProtKB-UniRule"/>
</dbReference>
<dbReference type="GO" id="GO:0071897">
    <property type="term" value="P:DNA biosynthetic process"/>
    <property type="evidence" value="ECO:0007669"/>
    <property type="project" value="UniProtKB-KW"/>
</dbReference>
<dbReference type="GO" id="GO:0036198">
    <property type="term" value="P:dTMP salvage"/>
    <property type="evidence" value="ECO:0000315"/>
    <property type="project" value="EcoCyc"/>
</dbReference>
<dbReference type="GO" id="GO:0046104">
    <property type="term" value="P:thymidine metabolic process"/>
    <property type="evidence" value="ECO:0000318"/>
    <property type="project" value="GO_Central"/>
</dbReference>
<dbReference type="FunFam" id="3.30.60.20:FF:000017">
    <property type="entry name" value="Thymidine kinase"/>
    <property type="match status" value="1"/>
</dbReference>
<dbReference type="FunFam" id="3.40.50.300:FF:000323">
    <property type="entry name" value="Thymidine kinase"/>
    <property type="match status" value="1"/>
</dbReference>
<dbReference type="Gene3D" id="3.30.60.20">
    <property type="match status" value="1"/>
</dbReference>
<dbReference type="Gene3D" id="3.40.50.300">
    <property type="entry name" value="P-loop containing nucleotide triphosphate hydrolases"/>
    <property type="match status" value="1"/>
</dbReference>
<dbReference type="HAMAP" id="MF_00124">
    <property type="entry name" value="Thymidine_kinase"/>
    <property type="match status" value="1"/>
</dbReference>
<dbReference type="InterPro" id="IPR027417">
    <property type="entry name" value="P-loop_NTPase"/>
</dbReference>
<dbReference type="InterPro" id="IPR001267">
    <property type="entry name" value="Thymidine_kinase"/>
</dbReference>
<dbReference type="InterPro" id="IPR020633">
    <property type="entry name" value="Thymidine_kinase_CS"/>
</dbReference>
<dbReference type="NCBIfam" id="NF003298">
    <property type="entry name" value="PRK04296.1-3"/>
    <property type="match status" value="1"/>
</dbReference>
<dbReference type="NCBIfam" id="NF003300">
    <property type="entry name" value="PRK04296.1-5"/>
    <property type="match status" value="1"/>
</dbReference>
<dbReference type="PANTHER" id="PTHR11441">
    <property type="entry name" value="THYMIDINE KINASE"/>
    <property type="match status" value="1"/>
</dbReference>
<dbReference type="PANTHER" id="PTHR11441:SF0">
    <property type="entry name" value="THYMIDINE KINASE, CYTOSOLIC"/>
    <property type="match status" value="1"/>
</dbReference>
<dbReference type="Pfam" id="PF00265">
    <property type="entry name" value="TK"/>
    <property type="match status" value="1"/>
</dbReference>
<dbReference type="PIRSF" id="PIRSF035805">
    <property type="entry name" value="TK_cell"/>
    <property type="match status" value="1"/>
</dbReference>
<dbReference type="SUPFAM" id="SSF57716">
    <property type="entry name" value="Glucocorticoid receptor-like (DNA-binding domain)"/>
    <property type="match status" value="1"/>
</dbReference>
<dbReference type="SUPFAM" id="SSF52540">
    <property type="entry name" value="P-loop containing nucleoside triphosphate hydrolases"/>
    <property type="match status" value="1"/>
</dbReference>
<dbReference type="PROSITE" id="PS00603">
    <property type="entry name" value="TK_CELLULAR_TYPE"/>
    <property type="match status" value="1"/>
</dbReference>
<keyword id="KW-0021">Allosteric enzyme</keyword>
<keyword id="KW-0067">ATP-binding</keyword>
<keyword id="KW-0963">Cytoplasm</keyword>
<keyword id="KW-0237">DNA synthesis</keyword>
<keyword id="KW-0418">Kinase</keyword>
<keyword id="KW-0479">Metal-binding</keyword>
<keyword id="KW-0547">Nucleotide-binding</keyword>
<keyword id="KW-1185">Reference proteome</keyword>
<keyword id="KW-0808">Transferase</keyword>
<keyword id="KW-0862">Zinc</keyword>
<gene>
    <name evidence="1" type="primary">tdk</name>
    <name type="ordered locus">b1238</name>
    <name type="ordered locus">JW1226</name>
</gene>
<accession>P23331</accession>
<accession>Q0H0G7</accession>
<comment type="function">
    <text>Phosphorylates both thymidine and deoxyuridine.</text>
</comment>
<comment type="catalytic activity">
    <reaction evidence="1">
        <text>thymidine + ATP = dTMP + ADP + H(+)</text>
        <dbReference type="Rhea" id="RHEA:19129"/>
        <dbReference type="ChEBI" id="CHEBI:15378"/>
        <dbReference type="ChEBI" id="CHEBI:17748"/>
        <dbReference type="ChEBI" id="CHEBI:30616"/>
        <dbReference type="ChEBI" id="CHEBI:63528"/>
        <dbReference type="ChEBI" id="CHEBI:456216"/>
        <dbReference type="EC" id="2.7.1.21"/>
    </reaction>
</comment>
<comment type="activity regulation">
    <text>Allosteric enzyme which is feedback inhibited by dTTP and activated by a number of dNDP and dNTP.</text>
</comment>
<comment type="subunit">
    <text evidence="1">Homotetramer.</text>
</comment>
<comment type="subcellular location">
    <subcellularLocation>
        <location evidence="1">Cytoplasm</location>
    </subcellularLocation>
</comment>
<comment type="similarity">
    <text evidence="1">Belongs to the thymidine kinase family.</text>
</comment>
<proteinExistence type="inferred from homology"/>
<reference key="1">
    <citation type="journal article" date="1991" name="Gene">
        <title>Escherichia coli thymidine kinase: nucleotide sequence of the gene and relationships to other thymidine kinases.</title>
        <authorList>
            <person name="Bockamp E.O."/>
            <person name="Blasco R."/>
            <person name="Vinuela E."/>
        </authorList>
    </citation>
    <scope>NUCLEOTIDE SEQUENCE [GENOMIC DNA]</scope>
    <source>
        <strain>K12</strain>
    </source>
</reference>
<reference key="2">
    <citation type="journal article" date="1991" name="Mol. Microbiol.">
        <title>Nucleotide sequence of the Escherichia coli thymidine kinase gene provides evidence for conservation of functional domains and quaternary structure.</title>
        <authorList>
            <person name="Black M.E."/>
            <person name="Hruby D.E."/>
        </authorList>
    </citation>
    <scope>NUCLEOTIDE SEQUENCE [GENOMIC DNA]</scope>
    <source>
        <strain>K12 / W3110 / ATCC 27325 / DSM 5911</strain>
    </source>
</reference>
<reference key="3">
    <citation type="journal article" date="1995" name="Microbiology">
        <title>Filling the gap between hns and adhE in Escherichia coli K12.</title>
        <authorList>
            <person name="Danchin A."/>
            <person name="Krin E."/>
        </authorList>
    </citation>
    <scope>NUCLEOTIDE SEQUENCE [GENOMIC DNA]</scope>
    <source>
        <strain>K12</strain>
    </source>
</reference>
<reference key="4">
    <citation type="journal article" date="2007" name="J. Antimicrob. Chemother.">
        <title>Nucleoside analogues are activated by bacterial deoxyribonucleoside kinases in a species-specific manner.</title>
        <authorList>
            <person name="Sandrini M.P."/>
            <person name="Clausen A.R."/>
            <person name="On S.L."/>
            <person name="Aarestrup F.M."/>
            <person name="Munch-Petersen B."/>
            <person name="Piskur J."/>
        </authorList>
    </citation>
    <scope>NUCLEOTIDE SEQUENCE [GENOMIC DNA]</scope>
    <source>
        <strain>K12 / MG1655 / ATCC 47076</strain>
    </source>
</reference>
<reference key="5">
    <citation type="journal article" date="1996" name="DNA Res.">
        <title>A 718-kb DNA sequence of the Escherichia coli K-12 genome corresponding to the 12.7-28.0 min region on the linkage map.</title>
        <authorList>
            <person name="Oshima T."/>
            <person name="Aiba H."/>
            <person name="Baba T."/>
            <person name="Fujita K."/>
            <person name="Hayashi K."/>
            <person name="Honjo A."/>
            <person name="Ikemoto K."/>
            <person name="Inada T."/>
            <person name="Itoh T."/>
            <person name="Kajihara M."/>
            <person name="Kanai K."/>
            <person name="Kashimoto K."/>
            <person name="Kimura S."/>
            <person name="Kitagawa M."/>
            <person name="Makino K."/>
            <person name="Masuda S."/>
            <person name="Miki T."/>
            <person name="Mizobuchi K."/>
            <person name="Mori H."/>
            <person name="Motomura K."/>
            <person name="Nakamura Y."/>
            <person name="Nashimoto H."/>
            <person name="Nishio Y."/>
            <person name="Saito N."/>
            <person name="Sampei G."/>
            <person name="Seki Y."/>
            <person name="Tagami H."/>
            <person name="Takemoto K."/>
            <person name="Wada C."/>
            <person name="Yamamoto Y."/>
            <person name="Yano M."/>
            <person name="Horiuchi T."/>
        </authorList>
    </citation>
    <scope>NUCLEOTIDE SEQUENCE [LARGE SCALE GENOMIC DNA]</scope>
    <source>
        <strain>K12 / W3110 / ATCC 27325 / DSM 5911</strain>
    </source>
</reference>
<reference key="6">
    <citation type="journal article" date="1997" name="Science">
        <title>The complete genome sequence of Escherichia coli K-12.</title>
        <authorList>
            <person name="Blattner F.R."/>
            <person name="Plunkett G. III"/>
            <person name="Bloch C.A."/>
            <person name="Perna N.T."/>
            <person name="Burland V."/>
            <person name="Riley M."/>
            <person name="Collado-Vides J."/>
            <person name="Glasner J.D."/>
            <person name="Rode C.K."/>
            <person name="Mayhew G.F."/>
            <person name="Gregor J."/>
            <person name="Davis N.W."/>
            <person name="Kirkpatrick H.A."/>
            <person name="Goeden M.A."/>
            <person name="Rose D.J."/>
            <person name="Mau B."/>
            <person name="Shao Y."/>
        </authorList>
    </citation>
    <scope>NUCLEOTIDE SEQUENCE [LARGE SCALE GENOMIC DNA]</scope>
    <source>
        <strain>K12 / MG1655 / ATCC 47076</strain>
    </source>
</reference>
<reference key="7">
    <citation type="journal article" date="2006" name="Mol. Syst. Biol.">
        <title>Highly accurate genome sequences of Escherichia coli K-12 strains MG1655 and W3110.</title>
        <authorList>
            <person name="Hayashi K."/>
            <person name="Morooka N."/>
            <person name="Yamamoto Y."/>
            <person name="Fujita K."/>
            <person name="Isono K."/>
            <person name="Choi S."/>
            <person name="Ohtsubo E."/>
            <person name="Baba T."/>
            <person name="Wanner B.L."/>
            <person name="Mori H."/>
            <person name="Horiuchi T."/>
        </authorList>
    </citation>
    <scope>NUCLEOTIDE SEQUENCE [LARGE SCALE GENOMIC DNA]</scope>
    <source>
        <strain>K12 / W3110 / ATCC 27325 / DSM 5911</strain>
    </source>
</reference>
<evidence type="ECO:0000255" key="1">
    <source>
        <dbReference type="HAMAP-Rule" id="MF_00124"/>
    </source>
</evidence>
<evidence type="ECO:0000305" key="2"/>
<sequence length="205" mass="23457">MAQLYFYYSAMNAGKSTALLQSSYNYQERGMRTVVYTAEIDDRFGAGKVSSRIGLSSPAKLFNQNSSLFDEIRAEHEQQAIHCVLVDECQFLTRQQVYELSEVVDQLDIPVLCYGLRTDFRGELFIGSQYLLAWSDKLVELKTICFCGRKASMVLRLDQAGRPYNEGEQVVIGGNERYVSVCRKHYKEALQVDSLTAIQERHRHD</sequence>
<name>KITH_ECOLI</name>
<protein>
    <recommendedName>
        <fullName evidence="1">Thymidine kinase</fullName>
        <ecNumber evidence="1">2.7.1.21</ecNumber>
    </recommendedName>
</protein>
<feature type="chain" id="PRO_0000174971" description="Thymidine kinase">
    <location>
        <begin position="1"/>
        <end position="205"/>
    </location>
</feature>
<feature type="active site" description="Proton acceptor" evidence="1">
    <location>
        <position position="88"/>
    </location>
</feature>
<feature type="binding site" evidence="2">
    <location>
        <begin position="9"/>
        <end position="16"/>
    </location>
    <ligand>
        <name>ATP</name>
        <dbReference type="ChEBI" id="CHEBI:30616"/>
    </ligand>
</feature>
<feature type="binding site" evidence="1">
    <location>
        <begin position="87"/>
        <end position="90"/>
    </location>
    <ligand>
        <name>ATP</name>
        <dbReference type="ChEBI" id="CHEBI:30616"/>
    </ligand>
</feature>
<feature type="binding site" evidence="1">
    <location>
        <position position="145"/>
    </location>
    <ligand>
        <name>Zn(2+)</name>
        <dbReference type="ChEBI" id="CHEBI:29105"/>
    </ligand>
</feature>
<feature type="binding site" evidence="1">
    <location>
        <position position="147"/>
    </location>
    <ligand>
        <name>Zn(2+)</name>
        <dbReference type="ChEBI" id="CHEBI:29105"/>
    </ligand>
</feature>
<feature type="binding site" evidence="1">
    <location>
        <position position="182"/>
    </location>
    <ligand>
        <name>Zn(2+)</name>
        <dbReference type="ChEBI" id="CHEBI:29105"/>
    </ligand>
</feature>
<feature type="binding site" evidence="1">
    <location>
        <position position="185"/>
    </location>
    <ligand>
        <name>Zn(2+)</name>
        <dbReference type="ChEBI" id="CHEBI:29105"/>
    </ligand>
</feature>
<organism>
    <name type="scientific">Escherichia coli (strain K12)</name>
    <dbReference type="NCBI Taxonomy" id="83333"/>
    <lineage>
        <taxon>Bacteria</taxon>
        <taxon>Pseudomonadati</taxon>
        <taxon>Pseudomonadota</taxon>
        <taxon>Gammaproteobacteria</taxon>
        <taxon>Enterobacterales</taxon>
        <taxon>Enterobacteriaceae</taxon>
        <taxon>Escherichia</taxon>
    </lineage>
</organism>